<proteinExistence type="inferred from homology"/>
<dbReference type="EMBL" id="CP000148">
    <property type="protein sequence ID" value="ABB30873.1"/>
    <property type="molecule type" value="Genomic_DNA"/>
</dbReference>
<dbReference type="RefSeq" id="WP_011365700.1">
    <property type="nucleotide sequence ID" value="NC_007517.1"/>
</dbReference>
<dbReference type="SMR" id="Q39Y01"/>
<dbReference type="STRING" id="269799.Gmet_0631"/>
<dbReference type="KEGG" id="gme:Gmet_0631"/>
<dbReference type="eggNOG" id="COG0091">
    <property type="taxonomic scope" value="Bacteria"/>
</dbReference>
<dbReference type="HOGENOM" id="CLU_083987_3_3_7"/>
<dbReference type="Proteomes" id="UP000007073">
    <property type="component" value="Chromosome"/>
</dbReference>
<dbReference type="GO" id="GO:0022625">
    <property type="term" value="C:cytosolic large ribosomal subunit"/>
    <property type="evidence" value="ECO:0007669"/>
    <property type="project" value="TreeGrafter"/>
</dbReference>
<dbReference type="GO" id="GO:0019843">
    <property type="term" value="F:rRNA binding"/>
    <property type="evidence" value="ECO:0007669"/>
    <property type="project" value="UniProtKB-UniRule"/>
</dbReference>
<dbReference type="GO" id="GO:0003735">
    <property type="term" value="F:structural constituent of ribosome"/>
    <property type="evidence" value="ECO:0007669"/>
    <property type="project" value="InterPro"/>
</dbReference>
<dbReference type="GO" id="GO:0006412">
    <property type="term" value="P:translation"/>
    <property type="evidence" value="ECO:0007669"/>
    <property type="project" value="UniProtKB-UniRule"/>
</dbReference>
<dbReference type="CDD" id="cd00336">
    <property type="entry name" value="Ribosomal_L22"/>
    <property type="match status" value="1"/>
</dbReference>
<dbReference type="Gene3D" id="3.90.470.10">
    <property type="entry name" value="Ribosomal protein L22/L17"/>
    <property type="match status" value="1"/>
</dbReference>
<dbReference type="HAMAP" id="MF_01331_B">
    <property type="entry name" value="Ribosomal_uL22_B"/>
    <property type="match status" value="1"/>
</dbReference>
<dbReference type="InterPro" id="IPR001063">
    <property type="entry name" value="Ribosomal_uL22"/>
</dbReference>
<dbReference type="InterPro" id="IPR005727">
    <property type="entry name" value="Ribosomal_uL22_bac/chlpt-type"/>
</dbReference>
<dbReference type="InterPro" id="IPR047867">
    <property type="entry name" value="Ribosomal_uL22_bac/org-type"/>
</dbReference>
<dbReference type="InterPro" id="IPR018260">
    <property type="entry name" value="Ribosomal_uL22_CS"/>
</dbReference>
<dbReference type="InterPro" id="IPR036394">
    <property type="entry name" value="Ribosomal_uL22_sf"/>
</dbReference>
<dbReference type="NCBIfam" id="TIGR01044">
    <property type="entry name" value="rplV_bact"/>
    <property type="match status" value="1"/>
</dbReference>
<dbReference type="PANTHER" id="PTHR13501">
    <property type="entry name" value="CHLOROPLAST 50S RIBOSOMAL PROTEIN L22-RELATED"/>
    <property type="match status" value="1"/>
</dbReference>
<dbReference type="PANTHER" id="PTHR13501:SF8">
    <property type="entry name" value="LARGE RIBOSOMAL SUBUNIT PROTEIN UL22M"/>
    <property type="match status" value="1"/>
</dbReference>
<dbReference type="Pfam" id="PF00237">
    <property type="entry name" value="Ribosomal_L22"/>
    <property type="match status" value="1"/>
</dbReference>
<dbReference type="SUPFAM" id="SSF54843">
    <property type="entry name" value="Ribosomal protein L22"/>
    <property type="match status" value="1"/>
</dbReference>
<dbReference type="PROSITE" id="PS00464">
    <property type="entry name" value="RIBOSOMAL_L22"/>
    <property type="match status" value="1"/>
</dbReference>
<gene>
    <name evidence="1" type="primary">rplV</name>
    <name type="ordered locus">Gmet_0631</name>
</gene>
<organism>
    <name type="scientific">Geobacter metallireducens (strain ATCC 53774 / DSM 7210 / GS-15)</name>
    <dbReference type="NCBI Taxonomy" id="269799"/>
    <lineage>
        <taxon>Bacteria</taxon>
        <taxon>Pseudomonadati</taxon>
        <taxon>Thermodesulfobacteriota</taxon>
        <taxon>Desulfuromonadia</taxon>
        <taxon>Geobacterales</taxon>
        <taxon>Geobacteraceae</taxon>
        <taxon>Geobacter</taxon>
    </lineage>
</organism>
<keyword id="KW-1185">Reference proteome</keyword>
<keyword id="KW-0687">Ribonucleoprotein</keyword>
<keyword id="KW-0689">Ribosomal protein</keyword>
<keyword id="KW-0694">RNA-binding</keyword>
<keyword id="KW-0699">rRNA-binding</keyword>
<comment type="function">
    <text evidence="1">This protein binds specifically to 23S rRNA; its binding is stimulated by other ribosomal proteins, e.g. L4, L17, and L20. It is important during the early stages of 50S assembly. It makes multiple contacts with different domains of the 23S rRNA in the assembled 50S subunit and ribosome (By similarity).</text>
</comment>
<comment type="function">
    <text evidence="1">The globular domain of the protein is located near the polypeptide exit tunnel on the outside of the subunit, while an extended beta-hairpin is found that lines the wall of the exit tunnel in the center of the 70S ribosome.</text>
</comment>
<comment type="subunit">
    <text evidence="1">Part of the 50S ribosomal subunit.</text>
</comment>
<comment type="similarity">
    <text evidence="1">Belongs to the universal ribosomal protein uL22 family.</text>
</comment>
<sequence length="110" mass="12085">MEARAKLSFARLSPRKTRLVVDMVRGRGIQDALTILRFSPQPSAKLVSKLLQSAVANAEQKGASDVDRLFVKTIFVDAGPVLKRFTPRAMGRASKIRKPTSHVTVVLADK</sequence>
<feature type="chain" id="PRO_0000243153" description="Large ribosomal subunit protein uL22">
    <location>
        <begin position="1"/>
        <end position="110"/>
    </location>
</feature>
<reference key="1">
    <citation type="journal article" date="2009" name="BMC Microbiol.">
        <title>The genome sequence of Geobacter metallireducens: features of metabolism, physiology and regulation common and dissimilar to Geobacter sulfurreducens.</title>
        <authorList>
            <person name="Aklujkar M."/>
            <person name="Krushkal J."/>
            <person name="DiBartolo G."/>
            <person name="Lapidus A."/>
            <person name="Land M.L."/>
            <person name="Lovley D.R."/>
        </authorList>
    </citation>
    <scope>NUCLEOTIDE SEQUENCE [LARGE SCALE GENOMIC DNA]</scope>
    <source>
        <strain>ATCC 53774 / DSM 7210 / GS-15</strain>
    </source>
</reference>
<name>RL22_GEOMG</name>
<protein>
    <recommendedName>
        <fullName evidence="1">Large ribosomal subunit protein uL22</fullName>
    </recommendedName>
    <alternativeName>
        <fullName evidence="2">50S ribosomal protein L22</fullName>
    </alternativeName>
</protein>
<evidence type="ECO:0000255" key="1">
    <source>
        <dbReference type="HAMAP-Rule" id="MF_01331"/>
    </source>
</evidence>
<evidence type="ECO:0000305" key="2"/>
<accession>Q39Y01</accession>